<keyword id="KW-0027">Amidation</keyword>
<keyword id="KW-0878">Amphibian defense peptide</keyword>
<keyword id="KW-0044">Antibiotic</keyword>
<keyword id="KW-0929">Antimicrobial</keyword>
<keyword id="KW-0165">Cleavage on pair of basic residues</keyword>
<keyword id="KW-0204">Cytolysis</keyword>
<keyword id="KW-0903">Direct protein sequencing</keyword>
<keyword id="KW-0295">Fungicide</keyword>
<keyword id="KW-0354">Hemolysis</keyword>
<keyword id="KW-0964">Secreted</keyword>
<keyword id="KW-0732">Signal</keyword>
<accession>Q58T86</accession>
<proteinExistence type="evidence at protein level"/>
<evidence type="ECO:0000250" key="1"/>
<evidence type="ECO:0000255" key="2"/>
<evidence type="ECO:0000269" key="3">
    <source>
    </source>
</evidence>
<evidence type="ECO:0000269" key="4">
    <source>
    </source>
</evidence>
<evidence type="ECO:0000305" key="5"/>
<dbReference type="EMBL" id="AY848974">
    <property type="protein sequence ID" value="AAX50195.1"/>
    <property type="molecule type" value="mRNA"/>
</dbReference>
<dbReference type="SMR" id="Q58T86"/>
<dbReference type="GO" id="GO:0005576">
    <property type="term" value="C:extracellular region"/>
    <property type="evidence" value="ECO:0007669"/>
    <property type="project" value="UniProtKB-SubCell"/>
</dbReference>
<dbReference type="GO" id="GO:0042742">
    <property type="term" value="P:defense response to bacterium"/>
    <property type="evidence" value="ECO:0007669"/>
    <property type="project" value="UniProtKB-KW"/>
</dbReference>
<dbReference type="GO" id="GO:0050832">
    <property type="term" value="P:defense response to fungus"/>
    <property type="evidence" value="ECO:0007669"/>
    <property type="project" value="UniProtKB-KW"/>
</dbReference>
<dbReference type="GO" id="GO:0031640">
    <property type="term" value="P:killing of cells of another organism"/>
    <property type="evidence" value="ECO:0007669"/>
    <property type="project" value="UniProtKB-KW"/>
</dbReference>
<dbReference type="InterPro" id="IPR007962">
    <property type="entry name" value="Bombinin"/>
</dbReference>
<dbReference type="Pfam" id="PF05298">
    <property type="entry name" value="Bombinin"/>
    <property type="match status" value="1"/>
</dbReference>
<reference key="1">
    <citation type="journal article" date="2005" name="Eur. J. Immunol.">
        <title>Variety of antimicrobial peptides in the Bombina maxima toad and evidence of their rapid diversification.</title>
        <authorList>
            <person name="Lee W.-H."/>
            <person name="Li Y."/>
            <person name="Lai R."/>
            <person name="Li S."/>
            <person name="Zhang Y."/>
            <person name="Wang W."/>
        </authorList>
    </citation>
    <scope>NUCLEOTIDE SEQUENCE [MRNA]</scope>
    <scope>PROTEIN SEQUENCE OF 44-70 AND 124-143</scope>
    <scope>AMIDATION AT ASN-70 AND ILE-143</scope>
    <scope>MASS SPECTROMETRY</scope>
    <source>
        <tissue>Skin</tissue>
    </source>
</reference>
<reference key="2">
    <citation type="journal article" date="2002" name="Peptides">
        <title>Antimicrobial peptides from skin secretions of Chinese red belly toad Bombina maxima.</title>
        <authorList>
            <person name="Lai R."/>
            <person name="Zheng Y.-T."/>
            <person name="Shen J.-H."/>
            <person name="Liu G.-J."/>
            <person name="Liu H."/>
            <person name="Lee W.-H."/>
            <person name="Tang S.-Z."/>
            <person name="Zhang Y."/>
        </authorList>
    </citation>
    <scope>PROTEIN SEQUENCE OF 44-70</scope>
    <scope>AMIDATION AT ASN-70</scope>
    <scope>MASS SPECTROMETRY</scope>
    <scope>FUNCTION OF MAXIMIN-2</scope>
</reference>
<feature type="signal peptide" evidence="2">
    <location>
        <begin position="1"/>
        <end position="18"/>
    </location>
</feature>
<feature type="propeptide" id="PRO_0000003096" evidence="3">
    <location>
        <begin position="19"/>
        <end position="43"/>
    </location>
</feature>
<feature type="peptide" id="PRO_0000003097" description="Maximin-2">
    <location>
        <begin position="44"/>
        <end position="70"/>
    </location>
</feature>
<feature type="propeptide" id="PRO_0000003098" evidence="1">
    <location>
        <begin position="74"/>
        <end position="123"/>
    </location>
</feature>
<feature type="peptide" id="PRO_0000003099" description="Maximin-H8">
    <location>
        <begin position="124"/>
        <end position="143"/>
    </location>
</feature>
<feature type="modified residue" description="Asparagine amide" evidence="3 4">
    <location>
        <position position="70"/>
    </location>
</feature>
<feature type="modified residue" description="Isoleucine amide" evidence="4">
    <location>
        <position position="143"/>
    </location>
</feature>
<organism>
    <name type="scientific">Bombina maxima</name>
    <name type="common">Giant fire-bellied toad</name>
    <name type="synonym">Chinese red belly toad</name>
    <dbReference type="NCBI Taxonomy" id="161274"/>
    <lineage>
        <taxon>Eukaryota</taxon>
        <taxon>Metazoa</taxon>
        <taxon>Chordata</taxon>
        <taxon>Craniata</taxon>
        <taxon>Vertebrata</taxon>
        <taxon>Euteleostomi</taxon>
        <taxon>Amphibia</taxon>
        <taxon>Batrachia</taxon>
        <taxon>Anura</taxon>
        <taxon>Bombinatoridae</taxon>
        <taxon>Bombina</taxon>
    </lineage>
</organism>
<name>M2H82_BOMMX</name>
<comment type="function">
    <text evidence="3">Maximin-2 shows antibacterial activity against both Gram-positive and Gram-negative bacteria. It also shows antimicrobial activity against the fungus C.albicans, but not against A.flavus nor P.uticale. It has little hemolytic activity.</text>
</comment>
<comment type="function">
    <text evidence="1">Maximin-H8 shows antimicrobial activity against bacteria and against the fungus C.albicans. Shows strong hemolytic activity (By similarity).</text>
</comment>
<comment type="subcellular location">
    <subcellularLocation>
        <location>Secreted</location>
    </subcellularLocation>
</comment>
<comment type="tissue specificity">
    <text>Expressed by the skin glands.</text>
</comment>
<comment type="mass spectrometry">
    <molecule>Maximin-2</molecule>
</comment>
<comment type="similarity">
    <text evidence="5">Belongs to the bombinin family.</text>
</comment>
<protein>
    <recommendedName>
        <fullName>Maximins 2/H8 type 2</fullName>
    </recommendedName>
    <component>
        <recommendedName>
            <fullName>Maximin-2</fullName>
        </recommendedName>
    </component>
    <component>
        <recommendedName>
            <fullName>Maximin-H8</fullName>
        </recommendedName>
    </component>
</protein>
<sequence>MNFKYIVAVSFLIASAYARSEENEIQSLSQRDVLEEESLREIRGIGTKILGGVKTALKGALKELASTYVNGKRTAEEHEVMKRLETVMRDLDSLDYPEEASERETRGFNQEEIANLFTKKEKRILGPVLGLVSNALGGLLKNIG</sequence>